<proteinExistence type="inferred from homology"/>
<sequence>MAATFSEPVAIIGTGCRFPGQCNTPSKLWELLQTPKDLLKEIPENRFSTEAFYHPQNYHHGTCNVRHSYFLEEDLRGFDAQFFGINPVEAHSVDPQQRLLLETVYESLEAAGLSMKEMQGSDTAVYVGVMSADFTDMIGRDPETFPTYFATGTARSILSNRLSFFFDWRGPSMTIDTACSSSLIEPRTGANKPDCAEQVAGSNLILGSEQYIAESKLQMLSPTGRSRMWDADADGYARGEGVAAIVLKKLSQAIADGDHIECIIRETGANQDGRTPGITMPSATAQEALIRTTYKKAGLDISKRSDRPQFFEAHGTGTPAGDPIEARAVSNAFFGPRSHFSPTSPDDTLFVGSIKTVVGHTEGTAGLAAVIKASLALQAGVVPPNMHLSKLNPKIEPFYGNVQILSEARQWPKLAEGGVRRVSVNSFGFGGANCHAILEAYEPESTLDRRRYNKRTGKCFTPFLFSAATENALAAQLDKYRAHVACGNASAPGDLKKLSLTLSNRRSALPWRAVVPASNSVERLIENLDQCNDFTNETSASSLGTRPRILGIFTGQGAQWPRMGAALIESSPAAAKILARLDESLRLLPIRDRPTWSLREKILEGAESSSVAMAFISQPVCAAVQIMLVDMLRAAGIEFSGVLGHSSGEISAAYAAGYLSSEDAIRAAYYRGFHMKSLTQKKGAMIAVGTSYDDAKELCDLPAFEGRVCVAASNSPFSVTLSGDADAIDEVKALMDEEKKFNRLLQVDRAYHSHHMKACAAAYMASLQQCGVRTLTRTAASSRCQWVSSVYVRHSAELAAEGGLEAKYWASNLTMPVMFTEALQKLLGDCKDGKAYDLAIEVGPHPALKGPAVQTMSEFLGGQSIPYTGVLSRGKDDVESFSTTLGYIWRTLGEGAVDFLGYSRFMNEEQGEATITPLNGLPTYPWDHHRKFWHESRLSRAYRFNKDPVNELLGRQILDGAPDQLRWRNVLKRNELDWLDGHQVQRQTVFPFMGYVSACVEAAMKIRGDANVQSIELQNFKVGQAVAFNDDDSWIEILVVLDSIKESKVKGTKTISAHFAFHSSSNNETVDMTTHAGCDVLVTYGDSISDLLPPPEIQADDEYFMLGVESDRFYNVLDDIGLGYTGPFRALSGLQRKLGKATGRIKNPASSKLWRKPLLVHPAMLDAGIQSIMLAYCYPGDTMMRSIYLPTGIRRLIINPEHCQTFAGEETDVLFQSSASVDDPQGLSGDVSIYAPGGLSCKAIQVEGLQTQPLFNPTEANDLNIFTELVWGVDRPDAKEIVNKVDVQQLDGDLLFSLERVAYYYLRILDKSIPLSQRTGIDWHFGQLFAYVDHVLSRVERGTNRFARKEWQHDTKEIILEILERYPDNIDLRLMRAVGENIAAVIRGEITMLEPMLQNNMLNDFYVVAHGMPRYTKYLASLASQIGHRYPHMHVLEIGAGTGGATKSFLGALDDKFSTYTFTDISSGFFEKARSVFASYSAKMSFKMLNIEKDIGDQGFVEGSYDVVIASLVLHATRNLGQTLRNVRRLLKPGGYLLLLEITENDQMRFGLLFGGLEGWWLGYDDGRALSPCINIEEWEKYLKQTGFSGIDTLMPHDEILPVPLSVIVSQAVDERTELLKQPLQRLDPSTTLVPQLTIIGSGALAEEVHRLLRPFCGRVNVIESLGHMGADQLPVGGAVICLADIQEPVFKSMDADKLRGFQTIFKQSGSALWVTQGTLNGNPYSRMVIGFGRTIVLEMLHLRLQFLDLDHEAPADPTAIVETFIRLHLAENWKNDGVKITPLLHSVEPEMHIDKEGRGFIPRFKLNKKQNDRYNSGRRKIVKEVPLRQQPVELVPPKSEDASWLLAEGKNMPELKGAIDIDVFYTVTRAVEVSGGTFLYAVLGARRDTKEVVLALSPTQASIIRVPQAFIIPAQDSVEYLQLFYTELLARAVLRDVAAGTVVVVLRPTSMLSCAVDRLAADRGARVLHLADEPGSDWDYLHHKSSKVQVQDWVKSRLGTEAPPAVLLLDFGADQFLLAYLLECLPAEVTRAMVGAQSTSSKARMKLGQSEQEIRSFLADVRYALLPAQQTHQSSKGRSSLKVFTLEHLTTNRAGSDVSVVSWPAGTSTIPVQVQPVNSKVTFSNDKTYWLVGLSGTLGLSLCEWMAQQGARYIVITSRNPNVDERWKNKMEKLGIKVEIIANNICDRKSVRSVYSHICQTMPPIGGVAQGAMVLHDTAFSELDLERINKVMQPKVNGSIYLEEIFHNTPLEFFVFFSSMACVTGNPGQSAYAAANMFMSGLAVQRRKRGLNASVVHIGAIFGNGYVTRELSLEQQNFLRKVGNMWLSEQDFRQLFAEAVLAGQPENTGSPELSTGMMTIDNSEGTKENITWFDNPMFQHCIKESTDGKLGGQTAKGRAVPVKTQLLEAINSAEVYEIIHDAFAAKLRSSLQLEDDRPIVDQTADTLGIDSLFAVDIRSWFIKELQLEIPVLKILGGATVGEILETAQQLLPMELLPKMDPNDKSPARKLKAQPDSSPDKAASAERSRAKAQTAIENDGDRKFAATRAESGAKKGETVSKKVEAVTRPSVQWQVPVEPSTAVGDLDDKSFPGEDGVRLRAGSLDTTFTHKSSASSSASILDASEDQSADSVWSLDTVNNELAVSKKTPISFAQSRIWFLEKFLEDPASALNITLTIELDGSLDVDRFGKAVKLVGQRHEALRTRFVHGDDFDAPMQEVLVHSTLSLEQQDIASDAEADEVYRELQKYRYKLGEGENMRIILLKKSNQLFHLVIGYHHINMDGVSLEVVLRELQMAYDSKRLPNFGTILQYPDFAALQQKEYKSGAWQDEIEFWRKEFDGRPPSVLPLLPMAKTRSRTALTSYSSHTAEFSLDQITLAGIQSACESSKATPFQFHLATFYALLSRMVDAADICIGIGSANRHDTAMMQSVGIYLNLLPIVLKSQPNETFASTLKRVRSKVMTAFAHSRVPFDVIVNELGASRATTHNPLFQVLVNYRQGTATRRSFCGCQSEVRSFEQGQAAYDLGLDIIENPGGECKVIMTGQSTLFVPEDMDMLKDMYQRLLLAFSRNQALRLAIPSLYDPEMVKHALRIGRGPSYTHKWPETLIHQIDDIAKQKSHSLAIVDGSGTFLTYAHMSRRTNAIAASLRGIRRGSRVGVHLDPGADWVCSVLAIMRRDAVYLPLDAVSGYSRLSAILQDSKPDLVLVDNSTEKDATAYFSPILAADQIFNIDTVSVTPPETLAIAAKRGSVAALMYTSGSTGVPKGIIMKHESFRNNIEIISEKLGYNNGHTVTLQQSSFNFDMSLGQIFLALSTGGTLHVVPRHLRADPVAISSIIALHGITNTSATPSEFISWVRYGSVEELRNSAWAAVHSGGEPVRDSLKAAFLTVNKPGLRLLDCYGPTEVTFCSHISDVDYGAEETSMNKGLEVLPNYATYIVDSGMKPVPAGVPGEVLIGGAGVVAGYLHTELNTRGFAHDSFASDEFRKQGWEQLHRTGDFGRINKLNGRLLLEGRIADDTQVKLRGLRIDLKEIEAAMVRAAKGDILDCIVSVAQSADVSDEYLVAYATARPDASNHRLEHLMHQLPLPQYMKPATLVLLEKMPTNASGKIDRSAFKSIPLPKATEDNGMQPEVGQDLNDTESRLKQLWEGVLPKHVFSQHKFTAASDFFNVGGSSMLLISLRAKIQDTFAVVVSLFQLFEASTLGDMAALVDELSSGSAEKTAGPNSALDINWEDETAVSPALLGIPVEKKFFTNPEIVVLTGSTGFLGRAILTRLLNDGIVKEIHCFAVREEIPLFDSPKIIVHRGDLTLPGFGLSQKELASIFSKAHAVIHNGADVSFVKSYHSLKPANLEATKQLVDLCLPYQISFHYISTAAVVNLTGEKSWEQRSVGRFPPPAGTDGYIATKWASERYLEKFNDQYGLPIWIHRPSSITGPGAPANDLMANVVEFSRSTAATLNTNSWSGWLDFISVDEAALQIVDEVYEDYSWPGHVKYLYESGERVVALEDMKNVLEREVGSVFEVVDVEEWISRAEKQGFNPLLGEYLKRVANAPLVFPKLIRHEGFF</sequence>
<organism>
    <name type="scientific">Pyricularia grisea</name>
    <name type="common">Crabgrass-specific blast fungus</name>
    <name type="synonym">Magnaporthe grisea</name>
    <dbReference type="NCBI Taxonomy" id="148305"/>
    <lineage>
        <taxon>Eukaryota</taxon>
        <taxon>Fungi</taxon>
        <taxon>Dikarya</taxon>
        <taxon>Ascomycota</taxon>
        <taxon>Pezizomycotina</taxon>
        <taxon>Sordariomycetes</taxon>
        <taxon>Sordariomycetidae</taxon>
        <taxon>Magnaporthales</taxon>
        <taxon>Pyriculariaceae</taxon>
        <taxon>Pyricularia</taxon>
    </lineage>
</organism>
<dbReference type="EC" id="2.3.1.-" evidence="12"/>
<dbReference type="EC" id="6.3.2.-" evidence="12"/>
<dbReference type="EMBL" id="MK801691">
    <property type="protein sequence ID" value="QCS37521.1"/>
    <property type="molecule type" value="Genomic_DNA"/>
</dbReference>
<dbReference type="SMR" id="A0A4P8WAE5"/>
<dbReference type="Proteomes" id="UP000515153">
    <property type="component" value="Unplaced"/>
</dbReference>
<dbReference type="GO" id="GO:0004312">
    <property type="term" value="F:fatty acid synthase activity"/>
    <property type="evidence" value="ECO:0007669"/>
    <property type="project" value="TreeGrafter"/>
</dbReference>
<dbReference type="GO" id="GO:0016853">
    <property type="term" value="F:isomerase activity"/>
    <property type="evidence" value="ECO:0007669"/>
    <property type="project" value="UniProtKB-KW"/>
</dbReference>
<dbReference type="GO" id="GO:0016874">
    <property type="term" value="F:ligase activity"/>
    <property type="evidence" value="ECO:0007669"/>
    <property type="project" value="UniProtKB-KW"/>
</dbReference>
<dbReference type="GO" id="GO:0008168">
    <property type="term" value="F:methyltransferase activity"/>
    <property type="evidence" value="ECO:0007669"/>
    <property type="project" value="UniProtKB-KW"/>
</dbReference>
<dbReference type="GO" id="GO:0016491">
    <property type="term" value="F:oxidoreductase activity"/>
    <property type="evidence" value="ECO:0007669"/>
    <property type="project" value="UniProtKB-KW"/>
</dbReference>
<dbReference type="GO" id="GO:0031177">
    <property type="term" value="F:phosphopantetheine binding"/>
    <property type="evidence" value="ECO:0007669"/>
    <property type="project" value="InterPro"/>
</dbReference>
<dbReference type="GO" id="GO:0006633">
    <property type="term" value="P:fatty acid biosynthetic process"/>
    <property type="evidence" value="ECO:0007669"/>
    <property type="project" value="TreeGrafter"/>
</dbReference>
<dbReference type="GO" id="GO:0032259">
    <property type="term" value="P:methylation"/>
    <property type="evidence" value="ECO:0007669"/>
    <property type="project" value="UniProtKB-KW"/>
</dbReference>
<dbReference type="GO" id="GO:0009403">
    <property type="term" value="P:toxin biosynthetic process"/>
    <property type="evidence" value="ECO:0007669"/>
    <property type="project" value="UniProtKB-ARBA"/>
</dbReference>
<dbReference type="CDD" id="cd05930">
    <property type="entry name" value="A_NRPS"/>
    <property type="match status" value="1"/>
</dbReference>
<dbReference type="CDD" id="cd02440">
    <property type="entry name" value="AdoMet_MTases"/>
    <property type="match status" value="1"/>
</dbReference>
<dbReference type="CDD" id="cd19532">
    <property type="entry name" value="C_PKS-NRPS"/>
    <property type="match status" value="1"/>
</dbReference>
<dbReference type="CDD" id="cd00833">
    <property type="entry name" value="PKS"/>
    <property type="match status" value="1"/>
</dbReference>
<dbReference type="Gene3D" id="3.30.300.30">
    <property type="match status" value="1"/>
</dbReference>
<dbReference type="Gene3D" id="3.40.47.10">
    <property type="match status" value="1"/>
</dbReference>
<dbReference type="Gene3D" id="1.10.1200.10">
    <property type="entry name" value="ACP-like"/>
    <property type="match status" value="2"/>
</dbReference>
<dbReference type="Gene3D" id="3.30.559.10">
    <property type="entry name" value="Chloramphenicol acetyltransferase-like domain"/>
    <property type="match status" value="1"/>
</dbReference>
<dbReference type="Gene3D" id="3.40.366.10">
    <property type="entry name" value="Malonyl-Coenzyme A Acyl Carrier Protein, domain 2"/>
    <property type="match status" value="1"/>
</dbReference>
<dbReference type="Gene3D" id="3.40.50.12780">
    <property type="entry name" value="N-terminal domain of ligase-like"/>
    <property type="match status" value="1"/>
</dbReference>
<dbReference type="Gene3D" id="3.40.50.720">
    <property type="entry name" value="NAD(P)-binding Rossmann-like Domain"/>
    <property type="match status" value="2"/>
</dbReference>
<dbReference type="Gene3D" id="3.30.559.30">
    <property type="entry name" value="Nonribosomal peptide synthetase, condensation domain"/>
    <property type="match status" value="1"/>
</dbReference>
<dbReference type="Gene3D" id="3.10.129.110">
    <property type="entry name" value="Polyketide synthase dehydratase"/>
    <property type="match status" value="1"/>
</dbReference>
<dbReference type="Gene3D" id="3.40.50.150">
    <property type="entry name" value="Vaccinia Virus protein VP39"/>
    <property type="match status" value="1"/>
</dbReference>
<dbReference type="InterPro" id="IPR001227">
    <property type="entry name" value="Ac_transferase_dom_sf"/>
</dbReference>
<dbReference type="InterPro" id="IPR036736">
    <property type="entry name" value="ACP-like_sf"/>
</dbReference>
<dbReference type="InterPro" id="IPR014043">
    <property type="entry name" value="Acyl_transferase_dom"/>
</dbReference>
<dbReference type="InterPro" id="IPR016035">
    <property type="entry name" value="Acyl_Trfase/lysoPLipase"/>
</dbReference>
<dbReference type="InterPro" id="IPR045851">
    <property type="entry name" value="AMP-bd_C_sf"/>
</dbReference>
<dbReference type="InterPro" id="IPR020845">
    <property type="entry name" value="AMP-binding_CS"/>
</dbReference>
<dbReference type="InterPro" id="IPR000873">
    <property type="entry name" value="AMP-dep_synth/lig_dom"/>
</dbReference>
<dbReference type="InterPro" id="IPR042099">
    <property type="entry name" value="ANL_N_sf"/>
</dbReference>
<dbReference type="InterPro" id="IPR023213">
    <property type="entry name" value="CAT-like_dom_sf"/>
</dbReference>
<dbReference type="InterPro" id="IPR001242">
    <property type="entry name" value="Condensatn"/>
</dbReference>
<dbReference type="InterPro" id="IPR013120">
    <property type="entry name" value="Far_NAD-bd"/>
</dbReference>
<dbReference type="InterPro" id="IPR014031">
    <property type="entry name" value="Ketoacyl_synth_C"/>
</dbReference>
<dbReference type="InterPro" id="IPR014030">
    <property type="entry name" value="Ketoacyl_synth_N"/>
</dbReference>
<dbReference type="InterPro" id="IPR016036">
    <property type="entry name" value="Malonyl_transacylase_ACP-bd"/>
</dbReference>
<dbReference type="InterPro" id="IPR013217">
    <property type="entry name" value="Methyltransf_12"/>
</dbReference>
<dbReference type="InterPro" id="IPR036291">
    <property type="entry name" value="NAD(P)-bd_dom_sf"/>
</dbReference>
<dbReference type="InterPro" id="IPR032821">
    <property type="entry name" value="PKS_assoc"/>
</dbReference>
<dbReference type="InterPro" id="IPR020841">
    <property type="entry name" value="PKS_Beta-ketoAc_synthase_dom"/>
</dbReference>
<dbReference type="InterPro" id="IPR042104">
    <property type="entry name" value="PKS_dehydratase_sf"/>
</dbReference>
<dbReference type="InterPro" id="IPR020807">
    <property type="entry name" value="PKS_DH"/>
</dbReference>
<dbReference type="InterPro" id="IPR049551">
    <property type="entry name" value="PKS_DH_C"/>
</dbReference>
<dbReference type="InterPro" id="IPR049552">
    <property type="entry name" value="PKS_DH_N"/>
</dbReference>
<dbReference type="InterPro" id="IPR013968">
    <property type="entry name" value="PKS_KR"/>
</dbReference>
<dbReference type="InterPro" id="IPR049900">
    <property type="entry name" value="PKS_mFAS_DH"/>
</dbReference>
<dbReference type="InterPro" id="IPR050091">
    <property type="entry name" value="PKS_NRPS_Biosynth_Enz"/>
</dbReference>
<dbReference type="InterPro" id="IPR020806">
    <property type="entry name" value="PKS_PP-bd"/>
</dbReference>
<dbReference type="InterPro" id="IPR009081">
    <property type="entry name" value="PP-bd_ACP"/>
</dbReference>
<dbReference type="InterPro" id="IPR029063">
    <property type="entry name" value="SAM-dependent_MTases_sf"/>
</dbReference>
<dbReference type="InterPro" id="IPR016039">
    <property type="entry name" value="Thiolase-like"/>
</dbReference>
<dbReference type="PANTHER" id="PTHR43775">
    <property type="entry name" value="FATTY ACID SYNTHASE"/>
    <property type="match status" value="1"/>
</dbReference>
<dbReference type="PANTHER" id="PTHR43775:SF20">
    <property type="entry name" value="HYBRID PKS-NRPS SYNTHETASE APDA"/>
    <property type="match status" value="1"/>
</dbReference>
<dbReference type="Pfam" id="PF00698">
    <property type="entry name" value="Acyl_transf_1"/>
    <property type="match status" value="1"/>
</dbReference>
<dbReference type="Pfam" id="PF00501">
    <property type="entry name" value="AMP-binding"/>
    <property type="match status" value="1"/>
</dbReference>
<dbReference type="Pfam" id="PF00668">
    <property type="entry name" value="Condensation"/>
    <property type="match status" value="1"/>
</dbReference>
<dbReference type="Pfam" id="PF16197">
    <property type="entry name" value="KAsynt_C_assoc"/>
    <property type="match status" value="1"/>
</dbReference>
<dbReference type="Pfam" id="PF00109">
    <property type="entry name" value="ketoacyl-synt"/>
    <property type="match status" value="1"/>
</dbReference>
<dbReference type="Pfam" id="PF02801">
    <property type="entry name" value="Ketoacyl-synt_C"/>
    <property type="match status" value="1"/>
</dbReference>
<dbReference type="Pfam" id="PF08659">
    <property type="entry name" value="KR"/>
    <property type="match status" value="1"/>
</dbReference>
<dbReference type="Pfam" id="PF08242">
    <property type="entry name" value="Methyltransf_12"/>
    <property type="match status" value="1"/>
</dbReference>
<dbReference type="Pfam" id="PF07993">
    <property type="entry name" value="NAD_binding_4"/>
    <property type="match status" value="1"/>
</dbReference>
<dbReference type="Pfam" id="PF21089">
    <property type="entry name" value="PKS_DH_N"/>
    <property type="match status" value="1"/>
</dbReference>
<dbReference type="Pfam" id="PF00550">
    <property type="entry name" value="PP-binding"/>
    <property type="match status" value="1"/>
</dbReference>
<dbReference type="Pfam" id="PF14765">
    <property type="entry name" value="PS-DH"/>
    <property type="match status" value="1"/>
</dbReference>
<dbReference type="SMART" id="SM00827">
    <property type="entry name" value="PKS_AT"/>
    <property type="match status" value="1"/>
</dbReference>
<dbReference type="SMART" id="SM00826">
    <property type="entry name" value="PKS_DH"/>
    <property type="match status" value="1"/>
</dbReference>
<dbReference type="SMART" id="SM00822">
    <property type="entry name" value="PKS_KR"/>
    <property type="match status" value="1"/>
</dbReference>
<dbReference type="SMART" id="SM00825">
    <property type="entry name" value="PKS_KS"/>
    <property type="match status" value="1"/>
</dbReference>
<dbReference type="SMART" id="SM00823">
    <property type="entry name" value="PKS_PP"/>
    <property type="match status" value="2"/>
</dbReference>
<dbReference type="SUPFAM" id="SSF56801">
    <property type="entry name" value="Acetyl-CoA synthetase-like"/>
    <property type="match status" value="1"/>
</dbReference>
<dbReference type="SUPFAM" id="SSF47336">
    <property type="entry name" value="ACP-like"/>
    <property type="match status" value="2"/>
</dbReference>
<dbReference type="SUPFAM" id="SSF52777">
    <property type="entry name" value="CoA-dependent acyltransferases"/>
    <property type="match status" value="2"/>
</dbReference>
<dbReference type="SUPFAM" id="SSF52151">
    <property type="entry name" value="FabD/lysophospholipase-like"/>
    <property type="match status" value="1"/>
</dbReference>
<dbReference type="SUPFAM" id="SSF51735">
    <property type="entry name" value="NAD(P)-binding Rossmann-fold domains"/>
    <property type="match status" value="2"/>
</dbReference>
<dbReference type="SUPFAM" id="SSF55048">
    <property type="entry name" value="Probable ACP-binding domain of malonyl-CoA ACP transacylase"/>
    <property type="match status" value="1"/>
</dbReference>
<dbReference type="SUPFAM" id="SSF53335">
    <property type="entry name" value="S-adenosyl-L-methionine-dependent methyltransferases"/>
    <property type="match status" value="1"/>
</dbReference>
<dbReference type="SUPFAM" id="SSF53901">
    <property type="entry name" value="Thiolase-like"/>
    <property type="match status" value="1"/>
</dbReference>
<dbReference type="PROSITE" id="PS00455">
    <property type="entry name" value="AMP_BINDING"/>
    <property type="match status" value="1"/>
</dbReference>
<dbReference type="PROSITE" id="PS50075">
    <property type="entry name" value="CARRIER"/>
    <property type="match status" value="2"/>
</dbReference>
<dbReference type="PROSITE" id="PS52004">
    <property type="entry name" value="KS3_2"/>
    <property type="match status" value="1"/>
</dbReference>
<dbReference type="PROSITE" id="PS52019">
    <property type="entry name" value="PKS_MFAS_DH"/>
    <property type="match status" value="1"/>
</dbReference>
<gene>
    <name evidence="10" type="primary">pyiS</name>
</gene>
<protein>
    <recommendedName>
        <fullName evidence="10">Polyketide synthase-nonribosomal peptide synthetase pyiS</fullName>
        <shortName evidence="10">PKS-NRPS pyiS</shortName>
        <ecNumber evidence="12">2.3.1.-</ecNumber>
        <ecNumber evidence="12">6.3.2.-</ecNumber>
    </recommendedName>
    <alternativeName>
        <fullName evidence="10">Pyrichalasin H biosynthesis cluster protein A</fullName>
    </alternativeName>
    <alternativeName>
        <fullName evidence="10">Pyrichalasin H synthase</fullName>
    </alternativeName>
</protein>
<accession>A0A4P8WAE5</accession>
<reference key="1">
    <citation type="journal article" date="2019" name="Org. Lett.">
        <title>Targeted gene inactivations expose silent cytochalasans in Magnaporthe grisea NI980.</title>
        <authorList>
            <person name="Wang C."/>
            <person name="Hantke V."/>
            <person name="Cox R.J."/>
            <person name="Skellam E."/>
        </authorList>
    </citation>
    <scope>NUCLEOTIDE SEQUENCE [GENOMIC DNA]</scope>
    <scope>FUNCTION</scope>
    <scope>DISRUPTION PHENOTYPE</scope>
    <scope>DOMAIN</scope>
    <scope>PATHWAY</scope>
    <source>
        <strain>NI980</strain>
    </source>
</reference>
<reference key="2">
    <citation type="journal article" date="2019" name="Org. Lett.">
        <title>Investigating the function of cryptic cytochalasan cytochrome P450 monooxygenases using combinatorial biosynthesis.</title>
        <authorList>
            <person name="Wang C."/>
            <person name="Becker K."/>
            <person name="Pfuetze S."/>
            <person name="Kuhnert E."/>
            <person name="Stadler M."/>
            <person name="Cox R.J."/>
            <person name="Skellam E."/>
        </authorList>
    </citation>
    <scope>FUNCTION</scope>
</reference>
<reference key="3">
    <citation type="journal article" date="2020" name="Chem. Commun. (Camb.)">
        <title>Evidence for enzyme catalysed intramolecular [4+2] Diels-Alder cyclization during the biosynthesis of pyrichalasin H.</title>
        <authorList>
            <person name="Hantke V."/>
            <person name="Skellam E.J."/>
            <person name="Cox R.J."/>
        </authorList>
    </citation>
    <scope>FUNCTION</scope>
</reference>
<feature type="chain" id="PRO_0000449442" description="Polyketide synthase-nonribosomal peptide synthetase pyiS">
    <location>
        <begin position="1"/>
        <end position="4065"/>
    </location>
</feature>
<feature type="domain" description="Ketosynthase family 3 (KS3)" evidence="5">
    <location>
        <begin position="6"/>
        <end position="440"/>
    </location>
</feature>
<feature type="domain" description="PKS/mFAS DH" evidence="6">
    <location>
        <begin position="950"/>
        <end position="1260"/>
    </location>
</feature>
<feature type="domain" description="Carrier 1" evidence="4">
    <location>
        <begin position="2411"/>
        <end position="2492"/>
    </location>
</feature>
<feature type="domain" description="Carrier 2" evidence="4">
    <location>
        <begin position="3634"/>
        <end position="3714"/>
    </location>
</feature>
<feature type="region of interest" description="Acyl transferase" evidence="1 3">
    <location>
        <begin position="552"/>
        <end position="875"/>
    </location>
</feature>
<feature type="region of interest" description="N-terminal hotdog fold" evidence="6">
    <location>
        <begin position="950"/>
        <end position="1087"/>
    </location>
</feature>
<feature type="region of interest" description="Dehydratase (DH) domain" evidence="1 3">
    <location>
        <begin position="951"/>
        <end position="1254"/>
    </location>
</feature>
<feature type="region of interest" description="C-terminal hotdog fold" evidence="6">
    <location>
        <begin position="1102"/>
        <end position="1260"/>
    </location>
</feature>
<feature type="region of interest" description="Methyltransferase (MT) domain" evidence="1 3">
    <location>
        <begin position="1409"/>
        <end position="1593"/>
    </location>
</feature>
<feature type="region of interest" description="Ketoreductase (KR)domain" evidence="1 3">
    <location>
        <begin position="2129"/>
        <end position="2302"/>
    </location>
</feature>
<feature type="region of interest" description="Disordered" evidence="7">
    <location>
        <begin position="2497"/>
        <end position="2561"/>
    </location>
</feature>
<feature type="region of interest" description="Condensation" evidence="1 3">
    <location>
        <begin position="2645"/>
        <end position="3076"/>
    </location>
</feature>
<feature type="region of interest" description="Adenylation" evidence="1 3">
    <location>
        <begin position="3112"/>
        <end position="3516"/>
    </location>
</feature>
<feature type="region of interest" description="Reductase-like" evidence="1 3">
    <location>
        <begin position="3760"/>
        <end position="3975"/>
    </location>
</feature>
<feature type="compositionally biased region" description="Basic and acidic residues" evidence="7">
    <location>
        <begin position="2551"/>
        <end position="2561"/>
    </location>
</feature>
<feature type="active site" description="For beta-ketoacyl synthase activity" evidence="5">
    <location>
        <position position="179"/>
    </location>
</feature>
<feature type="active site" description="For beta-ketoacyl synthase activity" evidence="5">
    <location>
        <position position="314"/>
    </location>
</feature>
<feature type="active site" description="For beta-ketoacyl synthase activity" evidence="5">
    <location>
        <position position="360"/>
    </location>
</feature>
<feature type="active site" description="Proton acceptor; for dehydratase activity" evidence="6">
    <location>
        <position position="982"/>
    </location>
</feature>
<feature type="active site" description="Proton donor; for dehydratase activity" evidence="6">
    <location>
        <position position="1166"/>
    </location>
</feature>
<feature type="modified residue" description="O-(pantetheine 4'-phosphoryl)serine" evidence="4">
    <location>
        <position position="2452"/>
    </location>
</feature>
<feature type="modified residue" description="O-(pantetheine 4'-phosphoryl)serine" evidence="4">
    <location>
        <position position="3674"/>
    </location>
</feature>
<comment type="function">
    <text evidence="8 9 13">Hybrid PKS-NRPS synthetase; part of the gene cluster that mediates the biosynthesis of the mycotoxin pyrichalasin H, a tyrosine-derived cytochalasan that inhibits the growth of rice seedlings, but also inhibits lymphocyte capping and actin polymerization and alters cell morphology (Probable) (PubMed:31099577). Pyrichalasin H is indicated as the responsible agent for the genus-specific pathogenicity of M.grisea toward crabgrass (PubMed:31099577). The first step in the pathway is catalyzed by the O-methyltransferase pyiA which methylates free tyrosine to generate the precursor O-methyltyrosine (PubMed:31099577). The hybrid PKS-NRPS pyiS, assisted by the enoyl reductase pyiC, are responsible for fusion of the O-methyltyrosine precursor and the polyketide backbone (PubMed:31099577). The polyketide synthase module (PKS) of pyiS is responsible for the synthesis of the polyketide backbone and the downstream nonribosomal peptide synthetase (NRPS) amidates the carboxyl end of the polyketide with the O-methyltyrosine precursor (PubMed:31099577). As the NRPS A-domain demonstrates substrate tolerance, pyiS can also use phenylalanine, tyrosine and even para-chlorophenylalanine as amino acid precursor, which leads to the production of novel cytochalasans, including halogenated cytochalasans (PubMed:31099577). Because pyiS lacks a designated enoylreductase (ER) domain, the required activity is provided the enoyl reductase pyiC (PubMed:31099577). Reduction by the hydrolyase pyiE leads to 1,5-dihydropyrrolone, which is substrate for dehydration and intra-molecular Diels-Alder cyclization by the Diels-Alderase pyiF to yield the required isoindolone-fused macrocycle (PubMed:32039410). The tailoring cytochrome P450 monooxygenases piyD and piyG catalyze the hydroxylation at C-18 and C-7, respectivily, whereas the short-chain dehydrogenase/reductase pyiH reduces the carbonyl at C-21 in preparation for the transfer of an acetyl group by the acetyltransferase pyiB (PubMed:31099577). These 3 reactions whose order is not clear yet, lead to the production of O-methylpyrichalasin J, a deacetylated pyrichalasin H (PubMed:31099577). Finally, pyiB to converts O-methylpyrichalasin J into the final product pyrichalasin H via acetylation of C-21 (PubMed:31099577).</text>
</comment>
<comment type="pathway">
    <text evidence="8">Mycotoxin biosynthesis.</text>
</comment>
<comment type="domain">
    <text evidence="2 12">NRP synthetases are composed of discrete domains (adenylation (A), thiolation (T) or peptidyl carrier protein (PCP) and condensation (C) domains) which when grouped together are referred to as a single module. Each module is responsible for the recognition (via the A domain) and incorporation of a single amino acid into the growing peptide product. Thus, an NRP synthetase is generally composed of one or more modules and can terminate in a thioesterase domain (TE) that releases the newly synthesized peptide from the enzyme. Occasionally, epimerase (E) domains (responsible for L- to D- amino acid conversion) are present within the NRP synthetase. CcsA also contains a polyketide synthase module (PKS) consisting of several catalytic domains including a ketoacyl synthase domain (KS), an acyl transferase domain (AT), a dehydratase domain (DH), a methyltransferase domain (MT), and a ketoreductase domain (KR). Instead of a thioesterase domain (TE), pyiS finishes with a reductase-like domain (R) for peptide release. PyiS has the following architecture: KS-AT-DH-MT-KR-PCP-C-A-T-R.</text>
</comment>
<comment type="disruption phenotype">
    <text evidence="8">Results in the complete abolition of pyrichalasin H and deacetylated pyrichalasin H production.</text>
</comment>
<comment type="similarity">
    <text evidence="11">Belongs to the NRP synthetase family.</text>
</comment>
<name>PYIS_PYRGI</name>
<keyword id="KW-0012">Acyltransferase</keyword>
<keyword id="KW-0413">Isomerase</keyword>
<keyword id="KW-0436">Ligase</keyword>
<keyword id="KW-0489">Methyltransferase</keyword>
<keyword id="KW-0511">Multifunctional enzyme</keyword>
<keyword id="KW-0521">NADP</keyword>
<keyword id="KW-0560">Oxidoreductase</keyword>
<keyword id="KW-0596">Phosphopantetheine</keyword>
<keyword id="KW-0597">Phosphoprotein</keyword>
<keyword id="KW-1185">Reference proteome</keyword>
<keyword id="KW-0677">Repeat</keyword>
<keyword id="KW-0949">S-adenosyl-L-methionine</keyword>
<keyword id="KW-0808">Transferase</keyword>
<evidence type="ECO:0000250" key="1">
    <source>
        <dbReference type="UniProtKB" id="A1CLY8"/>
    </source>
</evidence>
<evidence type="ECO:0000250" key="2">
    <source>
        <dbReference type="UniProtKB" id="Q4WAZ9"/>
    </source>
</evidence>
<evidence type="ECO:0000255" key="3"/>
<evidence type="ECO:0000255" key="4">
    <source>
        <dbReference type="PROSITE-ProRule" id="PRU00258"/>
    </source>
</evidence>
<evidence type="ECO:0000255" key="5">
    <source>
        <dbReference type="PROSITE-ProRule" id="PRU01348"/>
    </source>
</evidence>
<evidence type="ECO:0000255" key="6">
    <source>
        <dbReference type="PROSITE-ProRule" id="PRU01363"/>
    </source>
</evidence>
<evidence type="ECO:0000256" key="7">
    <source>
        <dbReference type="SAM" id="MobiDB-lite"/>
    </source>
</evidence>
<evidence type="ECO:0000269" key="8">
    <source>
    </source>
</evidence>
<evidence type="ECO:0000269" key="9">
    <source>
    </source>
</evidence>
<evidence type="ECO:0000303" key="10">
    <source>
    </source>
</evidence>
<evidence type="ECO:0000305" key="11"/>
<evidence type="ECO:0000305" key="12">
    <source>
    </source>
</evidence>
<evidence type="ECO:0000305" key="13">
    <source>
    </source>
</evidence>